<dbReference type="EC" id="4.1.1.23" evidence="1"/>
<dbReference type="EMBL" id="AE014074">
    <property type="protein sequence ID" value="AAM79223.1"/>
    <property type="molecule type" value="Genomic_DNA"/>
</dbReference>
<dbReference type="RefSeq" id="WP_002990139.1">
    <property type="nucleotide sequence ID" value="NC_004070.1"/>
</dbReference>
<dbReference type="SMR" id="P0DC80"/>
<dbReference type="GeneID" id="69900998"/>
<dbReference type="KEGG" id="spg:SpyM3_0616"/>
<dbReference type="HOGENOM" id="CLU_067069_1_1_9"/>
<dbReference type="UniPathway" id="UPA00070">
    <property type="reaction ID" value="UER00120"/>
</dbReference>
<dbReference type="Proteomes" id="UP000000564">
    <property type="component" value="Chromosome"/>
</dbReference>
<dbReference type="GO" id="GO:0005829">
    <property type="term" value="C:cytosol"/>
    <property type="evidence" value="ECO:0007669"/>
    <property type="project" value="TreeGrafter"/>
</dbReference>
<dbReference type="GO" id="GO:0004590">
    <property type="term" value="F:orotidine-5'-phosphate decarboxylase activity"/>
    <property type="evidence" value="ECO:0007669"/>
    <property type="project" value="UniProtKB-UniRule"/>
</dbReference>
<dbReference type="GO" id="GO:0006207">
    <property type="term" value="P:'de novo' pyrimidine nucleobase biosynthetic process"/>
    <property type="evidence" value="ECO:0007669"/>
    <property type="project" value="InterPro"/>
</dbReference>
<dbReference type="GO" id="GO:0044205">
    <property type="term" value="P:'de novo' UMP biosynthetic process"/>
    <property type="evidence" value="ECO:0007669"/>
    <property type="project" value="UniProtKB-UniRule"/>
</dbReference>
<dbReference type="CDD" id="cd04725">
    <property type="entry name" value="OMP_decarboxylase_like"/>
    <property type="match status" value="1"/>
</dbReference>
<dbReference type="FunFam" id="3.20.20.70:FF:000015">
    <property type="entry name" value="Orotidine 5'-phosphate decarboxylase"/>
    <property type="match status" value="1"/>
</dbReference>
<dbReference type="Gene3D" id="3.20.20.70">
    <property type="entry name" value="Aldolase class I"/>
    <property type="match status" value="1"/>
</dbReference>
<dbReference type="HAMAP" id="MF_01200_B">
    <property type="entry name" value="OMPdecase_type1_B"/>
    <property type="match status" value="1"/>
</dbReference>
<dbReference type="InterPro" id="IPR013785">
    <property type="entry name" value="Aldolase_TIM"/>
</dbReference>
<dbReference type="InterPro" id="IPR014732">
    <property type="entry name" value="OMPdecase"/>
</dbReference>
<dbReference type="InterPro" id="IPR018089">
    <property type="entry name" value="OMPdecase_AS"/>
</dbReference>
<dbReference type="InterPro" id="IPR047596">
    <property type="entry name" value="OMPdecase_bac"/>
</dbReference>
<dbReference type="InterPro" id="IPR001754">
    <property type="entry name" value="OMPdeCOase_dom"/>
</dbReference>
<dbReference type="InterPro" id="IPR011060">
    <property type="entry name" value="RibuloseP-bd_barrel"/>
</dbReference>
<dbReference type="NCBIfam" id="NF001273">
    <property type="entry name" value="PRK00230.1"/>
    <property type="match status" value="1"/>
</dbReference>
<dbReference type="NCBIfam" id="TIGR01740">
    <property type="entry name" value="pyrF"/>
    <property type="match status" value="1"/>
</dbReference>
<dbReference type="PANTHER" id="PTHR32119">
    <property type="entry name" value="OROTIDINE 5'-PHOSPHATE DECARBOXYLASE"/>
    <property type="match status" value="1"/>
</dbReference>
<dbReference type="PANTHER" id="PTHR32119:SF2">
    <property type="entry name" value="OROTIDINE 5'-PHOSPHATE DECARBOXYLASE"/>
    <property type="match status" value="1"/>
</dbReference>
<dbReference type="Pfam" id="PF00215">
    <property type="entry name" value="OMPdecase"/>
    <property type="match status" value="1"/>
</dbReference>
<dbReference type="SMART" id="SM00934">
    <property type="entry name" value="OMPdecase"/>
    <property type="match status" value="1"/>
</dbReference>
<dbReference type="SUPFAM" id="SSF51366">
    <property type="entry name" value="Ribulose-phoshate binding barrel"/>
    <property type="match status" value="1"/>
</dbReference>
<dbReference type="PROSITE" id="PS00156">
    <property type="entry name" value="OMPDECASE"/>
    <property type="match status" value="1"/>
</dbReference>
<keyword id="KW-0210">Decarboxylase</keyword>
<keyword id="KW-0456">Lyase</keyword>
<keyword id="KW-0665">Pyrimidine biosynthesis</keyword>
<organism>
    <name type="scientific">Streptococcus pyogenes serotype M3 (strain ATCC BAA-595 / MGAS315)</name>
    <dbReference type="NCBI Taxonomy" id="198466"/>
    <lineage>
        <taxon>Bacteria</taxon>
        <taxon>Bacillati</taxon>
        <taxon>Bacillota</taxon>
        <taxon>Bacilli</taxon>
        <taxon>Lactobacillales</taxon>
        <taxon>Streptococcaceae</taxon>
        <taxon>Streptococcus</taxon>
    </lineage>
</organism>
<feature type="chain" id="PRO_0000134590" description="Orotidine 5'-phosphate decarboxylase">
    <location>
        <begin position="1"/>
        <end position="230"/>
    </location>
</feature>
<feature type="active site" description="Proton donor" evidence="1">
    <location>
        <position position="63"/>
    </location>
</feature>
<feature type="binding site" evidence="1">
    <location>
        <position position="11"/>
    </location>
    <ligand>
        <name>substrate</name>
    </ligand>
</feature>
<feature type="binding site" evidence="1">
    <location>
        <position position="34"/>
    </location>
    <ligand>
        <name>substrate</name>
    </ligand>
</feature>
<feature type="binding site" evidence="1">
    <location>
        <begin position="61"/>
        <end position="70"/>
    </location>
    <ligand>
        <name>substrate</name>
    </ligand>
</feature>
<feature type="binding site" evidence="1">
    <location>
        <position position="117"/>
    </location>
    <ligand>
        <name>substrate</name>
    </ligand>
</feature>
<feature type="binding site" evidence="1">
    <location>
        <position position="179"/>
    </location>
    <ligand>
        <name>substrate</name>
    </ligand>
</feature>
<feature type="binding site" evidence="1">
    <location>
        <position position="188"/>
    </location>
    <ligand>
        <name>substrate</name>
    </ligand>
</feature>
<feature type="binding site" evidence="1">
    <location>
        <position position="208"/>
    </location>
    <ligand>
        <name>substrate</name>
    </ligand>
</feature>
<feature type="binding site" evidence="1">
    <location>
        <position position="209"/>
    </location>
    <ligand>
        <name>substrate</name>
    </ligand>
</feature>
<reference key="1">
    <citation type="journal article" date="2002" name="Proc. Natl. Acad. Sci. U.S.A.">
        <title>Genome sequence of a serotype M3 strain of group A Streptococcus: phage-encoded toxins, the high-virulence phenotype, and clone emergence.</title>
        <authorList>
            <person name="Beres S.B."/>
            <person name="Sylva G.L."/>
            <person name="Barbian K.D."/>
            <person name="Lei B."/>
            <person name="Hoff J.S."/>
            <person name="Mammarella N.D."/>
            <person name="Liu M.-Y."/>
            <person name="Smoot J.C."/>
            <person name="Porcella S.F."/>
            <person name="Parkins L.D."/>
            <person name="Campbell D.S."/>
            <person name="Smith T.M."/>
            <person name="McCormick J.K."/>
            <person name="Leung D.Y.M."/>
            <person name="Schlievert P.M."/>
            <person name="Musser J.M."/>
        </authorList>
    </citation>
    <scope>NUCLEOTIDE SEQUENCE [LARGE SCALE GENOMIC DNA]</scope>
    <source>
        <strain>ATCC BAA-595 / MGAS315</strain>
    </source>
</reference>
<comment type="function">
    <text evidence="1">Catalyzes the decarboxylation of orotidine 5'-monophosphate (OMP) to uridine 5'-monophosphate (UMP).</text>
</comment>
<comment type="catalytic activity">
    <reaction evidence="1">
        <text>orotidine 5'-phosphate + H(+) = UMP + CO2</text>
        <dbReference type="Rhea" id="RHEA:11596"/>
        <dbReference type="ChEBI" id="CHEBI:15378"/>
        <dbReference type="ChEBI" id="CHEBI:16526"/>
        <dbReference type="ChEBI" id="CHEBI:57538"/>
        <dbReference type="ChEBI" id="CHEBI:57865"/>
        <dbReference type="EC" id="4.1.1.23"/>
    </reaction>
</comment>
<comment type="pathway">
    <text evidence="1">Pyrimidine metabolism; UMP biosynthesis via de novo pathway; UMP from orotate: step 2/2.</text>
</comment>
<comment type="subunit">
    <text evidence="1">Homodimer.</text>
</comment>
<comment type="similarity">
    <text evidence="1">Belongs to the OMP decarboxylase family. Type 1 subfamily.</text>
</comment>
<evidence type="ECO:0000255" key="1">
    <source>
        <dbReference type="HAMAP-Rule" id="MF_01200"/>
    </source>
</evidence>
<sequence length="230" mass="24928">MKEERPIIALDFSSFEETKAFLDLFPAEEKLYVKIGMELYYAQGPDIVRSIKSLGHNVFLDLKLHDIPNTVRAAMAVLKELDIDMATVHAAGGVEMLKAAREGLGQGPTLIAVTQLTSTSEDQMRGDQNIQTSLLESVLHYSKGAAKAQLDGVVCSAQEVEAIKAVTPTGFTCLTPGIRPKGSNIGDQKRVMTPNQARRIGSDYIVVGRPITQAKDPVAAYQAIKAEWAG</sequence>
<gene>
    <name evidence="1" type="primary">pyrF</name>
    <name type="ordered locus">SpyM3_0616</name>
</gene>
<accession>P0DC80</accession>
<accession>Q8K7V3</accession>
<name>PYRF_STRP3</name>
<proteinExistence type="inferred from homology"/>
<protein>
    <recommendedName>
        <fullName evidence="1">Orotidine 5'-phosphate decarboxylase</fullName>
        <ecNumber evidence="1">4.1.1.23</ecNumber>
    </recommendedName>
    <alternativeName>
        <fullName evidence="1">OMP decarboxylase</fullName>
        <shortName evidence="1">OMPDCase</shortName>
        <shortName evidence="1">OMPdecase</shortName>
    </alternativeName>
</protein>